<evidence type="ECO:0000255" key="1">
    <source>
        <dbReference type="HAMAP-Rule" id="MF_01216"/>
    </source>
</evidence>
<reference key="1">
    <citation type="journal article" date="2004" name="Nat. Biotechnol.">
        <title>The genome sequence of the anaerobic, sulfate-reducing bacterium Desulfovibrio vulgaris Hildenborough.</title>
        <authorList>
            <person name="Heidelberg J.F."/>
            <person name="Seshadri R."/>
            <person name="Haveman S.A."/>
            <person name="Hemme C.L."/>
            <person name="Paulsen I.T."/>
            <person name="Kolonay J.F."/>
            <person name="Eisen J.A."/>
            <person name="Ward N.L."/>
            <person name="Methe B.A."/>
            <person name="Brinkac L.M."/>
            <person name="Daugherty S.C."/>
            <person name="DeBoy R.T."/>
            <person name="Dodson R.J."/>
            <person name="Durkin A.S."/>
            <person name="Madupu R."/>
            <person name="Nelson W.C."/>
            <person name="Sullivan S.A."/>
            <person name="Fouts D.E."/>
            <person name="Haft D.H."/>
            <person name="Selengut J."/>
            <person name="Peterson J.D."/>
            <person name="Davidsen T.M."/>
            <person name="Zafar N."/>
            <person name="Zhou L."/>
            <person name="Radune D."/>
            <person name="Dimitrov G."/>
            <person name="Hance M."/>
            <person name="Tran K."/>
            <person name="Khouri H.M."/>
            <person name="Gill J."/>
            <person name="Utterback T.R."/>
            <person name="Feldblyum T.V."/>
            <person name="Wall J.D."/>
            <person name="Voordouw G."/>
            <person name="Fraser C.M."/>
        </authorList>
    </citation>
    <scope>NUCLEOTIDE SEQUENCE [LARGE SCALE GENOMIC DNA]</scope>
    <source>
        <strain>ATCC 29579 / DSM 644 / CCUG 34227 / NCIMB 8303 / VKM B-1760 / Hildenborough</strain>
    </source>
</reference>
<sequence>MATILYIKASPRGERSHSVTVADAFVKAYSEANPGDVVRVLDVFEADLPAFGTDAVVARYLSGQGDPLSPAQEAAWAAVKRQVEDFKTADKYVIALPMWNFSIPWRLKQFFDIIIQPGLTFSYDEQGYHGLVTGRPVLVSYARGGAYPAGTPAEGWDFQKRYLEHILGFIGFTDIRSVVVEPTLAGGPDTAQAKRAEAVEQARRMALEF</sequence>
<proteinExistence type="inferred from homology"/>
<gene>
    <name evidence="1" type="primary">azoR</name>
    <name type="ordered locus">DVU_2548</name>
</gene>
<protein>
    <recommendedName>
        <fullName evidence="1">FMN-dependent NADH:quinone oxidoreductase</fullName>
        <ecNumber evidence="1">1.6.5.-</ecNumber>
    </recommendedName>
    <alternativeName>
        <fullName evidence="1">Azo-dye reductase</fullName>
    </alternativeName>
    <alternativeName>
        <fullName evidence="1">FMN-dependent NADH-azo compound oxidoreductase</fullName>
    </alternativeName>
    <alternativeName>
        <fullName evidence="1">FMN-dependent NADH-azoreductase</fullName>
        <ecNumber evidence="1">1.7.1.17</ecNumber>
    </alternativeName>
</protein>
<feature type="chain" id="PRO_0000245916" description="FMN-dependent NADH:quinone oxidoreductase">
    <location>
        <begin position="1"/>
        <end position="209"/>
    </location>
</feature>
<feature type="binding site" evidence="1">
    <location>
        <position position="10"/>
    </location>
    <ligand>
        <name>FMN</name>
        <dbReference type="ChEBI" id="CHEBI:58210"/>
    </ligand>
</feature>
<feature type="binding site" evidence="1">
    <location>
        <begin position="16"/>
        <end position="18"/>
    </location>
    <ligand>
        <name>FMN</name>
        <dbReference type="ChEBI" id="CHEBI:58210"/>
    </ligand>
</feature>
<feature type="binding site" evidence="1">
    <location>
        <begin position="98"/>
        <end position="101"/>
    </location>
    <ligand>
        <name>FMN</name>
        <dbReference type="ChEBI" id="CHEBI:58210"/>
    </ligand>
</feature>
<comment type="function">
    <text evidence="1">Quinone reductase that provides resistance to thiol-specific stress caused by electrophilic quinones.</text>
</comment>
<comment type="function">
    <text evidence="1">Also exhibits azoreductase activity. Catalyzes the reductive cleavage of the azo bond in aromatic azo compounds to the corresponding amines.</text>
</comment>
<comment type="catalytic activity">
    <reaction evidence="1">
        <text>2 a quinone + NADH + H(+) = 2 a 1,4-benzosemiquinone + NAD(+)</text>
        <dbReference type="Rhea" id="RHEA:65952"/>
        <dbReference type="ChEBI" id="CHEBI:15378"/>
        <dbReference type="ChEBI" id="CHEBI:57540"/>
        <dbReference type="ChEBI" id="CHEBI:57945"/>
        <dbReference type="ChEBI" id="CHEBI:132124"/>
        <dbReference type="ChEBI" id="CHEBI:134225"/>
    </reaction>
</comment>
<comment type="catalytic activity">
    <reaction evidence="1">
        <text>N,N-dimethyl-1,4-phenylenediamine + anthranilate + 2 NAD(+) = 2-(4-dimethylaminophenyl)diazenylbenzoate + 2 NADH + 2 H(+)</text>
        <dbReference type="Rhea" id="RHEA:55872"/>
        <dbReference type="ChEBI" id="CHEBI:15378"/>
        <dbReference type="ChEBI" id="CHEBI:15783"/>
        <dbReference type="ChEBI" id="CHEBI:16567"/>
        <dbReference type="ChEBI" id="CHEBI:57540"/>
        <dbReference type="ChEBI" id="CHEBI:57945"/>
        <dbReference type="ChEBI" id="CHEBI:71579"/>
        <dbReference type="EC" id="1.7.1.17"/>
    </reaction>
</comment>
<comment type="cofactor">
    <cofactor evidence="1">
        <name>FMN</name>
        <dbReference type="ChEBI" id="CHEBI:58210"/>
    </cofactor>
    <text evidence="1">Binds 1 FMN per subunit.</text>
</comment>
<comment type="subunit">
    <text evidence="1">Homodimer.</text>
</comment>
<comment type="similarity">
    <text evidence="1">Belongs to the azoreductase type 1 family.</text>
</comment>
<accession>Q728Q5</accession>
<dbReference type="EC" id="1.6.5.-" evidence="1"/>
<dbReference type="EC" id="1.7.1.17" evidence="1"/>
<dbReference type="EMBL" id="AE017285">
    <property type="protein sequence ID" value="AAS97020.1"/>
    <property type="molecule type" value="Genomic_DNA"/>
</dbReference>
<dbReference type="RefSeq" id="WP_010939818.1">
    <property type="nucleotide sequence ID" value="NC_002937.3"/>
</dbReference>
<dbReference type="RefSeq" id="YP_011760.1">
    <property type="nucleotide sequence ID" value="NC_002937.3"/>
</dbReference>
<dbReference type="SMR" id="Q728Q5"/>
<dbReference type="STRING" id="882.DVU_2548"/>
<dbReference type="PaxDb" id="882-DVU_2548"/>
<dbReference type="EnsemblBacteria" id="AAS97020">
    <property type="protein sequence ID" value="AAS97020"/>
    <property type="gene ID" value="DVU_2548"/>
</dbReference>
<dbReference type="KEGG" id="dvu:DVU_2548"/>
<dbReference type="PATRIC" id="fig|882.5.peg.2305"/>
<dbReference type="eggNOG" id="COG1182">
    <property type="taxonomic scope" value="Bacteria"/>
</dbReference>
<dbReference type="HOGENOM" id="CLU_088964_1_0_7"/>
<dbReference type="OrthoDB" id="9787136at2"/>
<dbReference type="PhylomeDB" id="Q728Q5"/>
<dbReference type="Proteomes" id="UP000002194">
    <property type="component" value="Chromosome"/>
</dbReference>
<dbReference type="GO" id="GO:0009055">
    <property type="term" value="F:electron transfer activity"/>
    <property type="evidence" value="ECO:0007669"/>
    <property type="project" value="UniProtKB-UniRule"/>
</dbReference>
<dbReference type="GO" id="GO:0010181">
    <property type="term" value="F:FMN binding"/>
    <property type="evidence" value="ECO:0007669"/>
    <property type="project" value="UniProtKB-UniRule"/>
</dbReference>
<dbReference type="GO" id="GO:0016652">
    <property type="term" value="F:oxidoreductase activity, acting on NAD(P)H as acceptor"/>
    <property type="evidence" value="ECO:0007669"/>
    <property type="project" value="UniProtKB-UniRule"/>
</dbReference>
<dbReference type="GO" id="GO:0016655">
    <property type="term" value="F:oxidoreductase activity, acting on NAD(P)H, quinone or similar compound as acceptor"/>
    <property type="evidence" value="ECO:0007669"/>
    <property type="project" value="InterPro"/>
</dbReference>
<dbReference type="Gene3D" id="3.40.50.360">
    <property type="match status" value="1"/>
</dbReference>
<dbReference type="HAMAP" id="MF_01216">
    <property type="entry name" value="Azoreductase_type1"/>
    <property type="match status" value="1"/>
</dbReference>
<dbReference type="InterPro" id="IPR003680">
    <property type="entry name" value="Flavodoxin_fold"/>
</dbReference>
<dbReference type="InterPro" id="IPR029039">
    <property type="entry name" value="Flavoprotein-like_sf"/>
</dbReference>
<dbReference type="InterPro" id="IPR050104">
    <property type="entry name" value="FMN-dep_NADH:Q_OxRdtase_AzoR1"/>
</dbReference>
<dbReference type="InterPro" id="IPR023048">
    <property type="entry name" value="NADH:quinone_OxRdtase_FMN_depd"/>
</dbReference>
<dbReference type="PANTHER" id="PTHR43741">
    <property type="entry name" value="FMN-DEPENDENT NADH-AZOREDUCTASE 1"/>
    <property type="match status" value="1"/>
</dbReference>
<dbReference type="PANTHER" id="PTHR43741:SF4">
    <property type="entry name" value="FMN-DEPENDENT NADH:QUINONE OXIDOREDUCTASE"/>
    <property type="match status" value="1"/>
</dbReference>
<dbReference type="Pfam" id="PF02525">
    <property type="entry name" value="Flavodoxin_2"/>
    <property type="match status" value="1"/>
</dbReference>
<dbReference type="SUPFAM" id="SSF52218">
    <property type="entry name" value="Flavoproteins"/>
    <property type="match status" value="1"/>
</dbReference>
<organism>
    <name type="scientific">Nitratidesulfovibrio vulgaris (strain ATCC 29579 / DSM 644 / CCUG 34227 / NCIMB 8303 / VKM B-1760 / Hildenborough)</name>
    <name type="common">Desulfovibrio vulgaris</name>
    <dbReference type="NCBI Taxonomy" id="882"/>
    <lineage>
        <taxon>Bacteria</taxon>
        <taxon>Pseudomonadati</taxon>
        <taxon>Thermodesulfobacteriota</taxon>
        <taxon>Desulfovibrionia</taxon>
        <taxon>Desulfovibrionales</taxon>
        <taxon>Desulfovibrionaceae</taxon>
        <taxon>Nitratidesulfovibrio</taxon>
    </lineage>
</organism>
<name>AZOR_NITV2</name>
<keyword id="KW-0285">Flavoprotein</keyword>
<keyword id="KW-0288">FMN</keyword>
<keyword id="KW-0520">NAD</keyword>
<keyword id="KW-0560">Oxidoreductase</keyword>
<keyword id="KW-1185">Reference proteome</keyword>